<accession>A6X562</accession>
<comment type="function">
    <text evidence="1">Allows the formation of correctly charged Gln-tRNA(Gln) through the transamidation of misacylated Glu-tRNA(Gln) in organisms which lack glutaminyl-tRNA synthetase. The reaction takes place in the presence of glutamine and ATP through an activated gamma-phospho-Glu-tRNA(Gln).</text>
</comment>
<comment type="catalytic activity">
    <reaction evidence="1">
        <text>L-glutamyl-tRNA(Gln) + L-glutamine + ATP + H2O = L-glutaminyl-tRNA(Gln) + L-glutamate + ADP + phosphate + H(+)</text>
        <dbReference type="Rhea" id="RHEA:17521"/>
        <dbReference type="Rhea" id="RHEA-COMP:9681"/>
        <dbReference type="Rhea" id="RHEA-COMP:9684"/>
        <dbReference type="ChEBI" id="CHEBI:15377"/>
        <dbReference type="ChEBI" id="CHEBI:15378"/>
        <dbReference type="ChEBI" id="CHEBI:29985"/>
        <dbReference type="ChEBI" id="CHEBI:30616"/>
        <dbReference type="ChEBI" id="CHEBI:43474"/>
        <dbReference type="ChEBI" id="CHEBI:58359"/>
        <dbReference type="ChEBI" id="CHEBI:78520"/>
        <dbReference type="ChEBI" id="CHEBI:78521"/>
        <dbReference type="ChEBI" id="CHEBI:456216"/>
        <dbReference type="EC" id="6.3.5.7"/>
    </reaction>
</comment>
<comment type="subunit">
    <text evidence="1">Heterotrimer of A, B and C subunits.</text>
</comment>
<comment type="similarity">
    <text evidence="1">Belongs to the amidase family. GatA subfamily.</text>
</comment>
<gene>
    <name evidence="1" type="primary">gatA</name>
    <name type="ordered locus">Oant_3660</name>
</gene>
<feature type="chain" id="PRO_1000015875" description="Glutamyl-tRNA(Gln) amidotransferase subunit A">
    <location>
        <begin position="1"/>
        <end position="493"/>
    </location>
</feature>
<feature type="active site" description="Charge relay system" evidence="1">
    <location>
        <position position="79"/>
    </location>
</feature>
<feature type="active site" description="Charge relay system" evidence="1">
    <location>
        <position position="159"/>
    </location>
</feature>
<feature type="active site" description="Acyl-ester intermediate" evidence="1">
    <location>
        <position position="183"/>
    </location>
</feature>
<sequence>MSELTALTIAEARDKLKAKAITATELTDAYLSAIDSANETINAYVKVTHDQARSMAKASDERIAKGEAGALEGIPLGVKDLFATKGVHTQACSHILDGFKPEYESTVTANLWADGAVMLGKLNMDEFAMGSSNETSYYGSVKNPWRANGSNADLVPGGSSGGSAAAVAAQLCAGATATDTGGSIRQPAAFTGTVGIKPTYGRVSRWGTVAFASSLDQAGPIARDVRDAAILLKSMASLDLKDTTSVDLPIPDYEAAIGKSLKGMKIGIPKEYRVDGMPDEIEELWQKGIQYLKDAGAEIIDISLPNTKYALPAYYIVAPAEASSNLARYDGVRYGLRVPGKDIADMYEQTRAAGFGKEVKRRIMIGTYVLSAGYYDAYYLRAQKVRTLIKKDFEDVFAKGVHAILTPATPSAAFGLADEDLANDPVKMYLNDIFTVTVNMAGLPGIAVPAGINDKGLPLGLQLIGRPFEEETLFQAAHAIEQAAGRFTPAKWW</sequence>
<keyword id="KW-0067">ATP-binding</keyword>
<keyword id="KW-0436">Ligase</keyword>
<keyword id="KW-0547">Nucleotide-binding</keyword>
<keyword id="KW-0648">Protein biosynthesis</keyword>
<keyword id="KW-1185">Reference proteome</keyword>
<reference key="1">
    <citation type="journal article" date="2011" name="J. Bacteriol.">
        <title>Genome of Ochrobactrum anthropi ATCC 49188 T, a versatile opportunistic pathogen and symbiont of several eukaryotic hosts.</title>
        <authorList>
            <person name="Chain P.S."/>
            <person name="Lang D.M."/>
            <person name="Comerci D.J."/>
            <person name="Malfatti S.A."/>
            <person name="Vergez L.M."/>
            <person name="Shin M."/>
            <person name="Ugalde R.A."/>
            <person name="Garcia E."/>
            <person name="Tolmasky M.E."/>
        </authorList>
    </citation>
    <scope>NUCLEOTIDE SEQUENCE [LARGE SCALE GENOMIC DNA]</scope>
    <source>
        <strain>ATCC 49188 / DSM 6882 / CCUG 24695 / JCM 21032 / LMG 3331 / NBRC 15819 / NCTC 12168 / Alc 37</strain>
    </source>
</reference>
<proteinExistence type="inferred from homology"/>
<dbReference type="EC" id="6.3.5.7" evidence="1"/>
<dbReference type="EMBL" id="CP000759">
    <property type="protein sequence ID" value="ABS16366.1"/>
    <property type="molecule type" value="Genomic_DNA"/>
</dbReference>
<dbReference type="RefSeq" id="WP_012093044.1">
    <property type="nucleotide sequence ID" value="NC_009668.1"/>
</dbReference>
<dbReference type="SMR" id="A6X562"/>
<dbReference type="STRING" id="439375.Oant_3660"/>
<dbReference type="KEGG" id="oan:Oant_3660"/>
<dbReference type="PATRIC" id="fig|439375.7.peg.3822"/>
<dbReference type="eggNOG" id="COG0154">
    <property type="taxonomic scope" value="Bacteria"/>
</dbReference>
<dbReference type="HOGENOM" id="CLU_009600_0_3_5"/>
<dbReference type="PhylomeDB" id="A6X562"/>
<dbReference type="Proteomes" id="UP000002301">
    <property type="component" value="Chromosome 2"/>
</dbReference>
<dbReference type="GO" id="GO:0030956">
    <property type="term" value="C:glutamyl-tRNA(Gln) amidotransferase complex"/>
    <property type="evidence" value="ECO:0007669"/>
    <property type="project" value="InterPro"/>
</dbReference>
<dbReference type="GO" id="GO:0005524">
    <property type="term" value="F:ATP binding"/>
    <property type="evidence" value="ECO:0007669"/>
    <property type="project" value="UniProtKB-KW"/>
</dbReference>
<dbReference type="GO" id="GO:0050567">
    <property type="term" value="F:glutaminyl-tRNA synthase (glutamine-hydrolyzing) activity"/>
    <property type="evidence" value="ECO:0007669"/>
    <property type="project" value="UniProtKB-UniRule"/>
</dbReference>
<dbReference type="GO" id="GO:0006412">
    <property type="term" value="P:translation"/>
    <property type="evidence" value="ECO:0007669"/>
    <property type="project" value="UniProtKB-UniRule"/>
</dbReference>
<dbReference type="Gene3D" id="3.90.1300.10">
    <property type="entry name" value="Amidase signature (AS) domain"/>
    <property type="match status" value="1"/>
</dbReference>
<dbReference type="HAMAP" id="MF_00120">
    <property type="entry name" value="GatA"/>
    <property type="match status" value="1"/>
</dbReference>
<dbReference type="InterPro" id="IPR000120">
    <property type="entry name" value="Amidase"/>
</dbReference>
<dbReference type="InterPro" id="IPR020556">
    <property type="entry name" value="Amidase_CS"/>
</dbReference>
<dbReference type="InterPro" id="IPR023631">
    <property type="entry name" value="Amidase_dom"/>
</dbReference>
<dbReference type="InterPro" id="IPR036928">
    <property type="entry name" value="AS_sf"/>
</dbReference>
<dbReference type="InterPro" id="IPR004412">
    <property type="entry name" value="GatA"/>
</dbReference>
<dbReference type="NCBIfam" id="TIGR00132">
    <property type="entry name" value="gatA"/>
    <property type="match status" value="1"/>
</dbReference>
<dbReference type="PANTHER" id="PTHR11895:SF151">
    <property type="entry name" value="GLUTAMYL-TRNA(GLN) AMIDOTRANSFERASE SUBUNIT A"/>
    <property type="match status" value="1"/>
</dbReference>
<dbReference type="PANTHER" id="PTHR11895">
    <property type="entry name" value="TRANSAMIDASE"/>
    <property type="match status" value="1"/>
</dbReference>
<dbReference type="Pfam" id="PF01425">
    <property type="entry name" value="Amidase"/>
    <property type="match status" value="1"/>
</dbReference>
<dbReference type="SUPFAM" id="SSF75304">
    <property type="entry name" value="Amidase signature (AS) enzymes"/>
    <property type="match status" value="1"/>
</dbReference>
<dbReference type="PROSITE" id="PS00571">
    <property type="entry name" value="AMIDASES"/>
    <property type="match status" value="1"/>
</dbReference>
<name>GATA_BRUA4</name>
<evidence type="ECO:0000255" key="1">
    <source>
        <dbReference type="HAMAP-Rule" id="MF_00120"/>
    </source>
</evidence>
<organism>
    <name type="scientific">Brucella anthropi (strain ATCC 49188 / DSM 6882 / CCUG 24695 / JCM 21032 / LMG 3331 / NBRC 15819 / NCTC 12168 / Alc 37)</name>
    <name type="common">Ochrobactrum anthropi</name>
    <dbReference type="NCBI Taxonomy" id="439375"/>
    <lineage>
        <taxon>Bacteria</taxon>
        <taxon>Pseudomonadati</taxon>
        <taxon>Pseudomonadota</taxon>
        <taxon>Alphaproteobacteria</taxon>
        <taxon>Hyphomicrobiales</taxon>
        <taxon>Brucellaceae</taxon>
        <taxon>Brucella/Ochrobactrum group</taxon>
        <taxon>Brucella</taxon>
    </lineage>
</organism>
<protein>
    <recommendedName>
        <fullName evidence="1">Glutamyl-tRNA(Gln) amidotransferase subunit A</fullName>
        <shortName evidence="1">Glu-ADT subunit A</shortName>
        <ecNumber evidence="1">6.3.5.7</ecNumber>
    </recommendedName>
</protein>